<accession>P0C553</accession>
<organism>
    <name type="scientific">Bungarus fasciatus</name>
    <name type="common">Banded krait</name>
    <name type="synonym">Pseudoboa fasciata</name>
    <dbReference type="NCBI Taxonomy" id="8613"/>
    <lineage>
        <taxon>Eukaryota</taxon>
        <taxon>Metazoa</taxon>
        <taxon>Chordata</taxon>
        <taxon>Craniata</taxon>
        <taxon>Vertebrata</taxon>
        <taxon>Euteleostomi</taxon>
        <taxon>Lepidosauria</taxon>
        <taxon>Squamata</taxon>
        <taxon>Bifurcata</taxon>
        <taxon>Unidentata</taxon>
        <taxon>Episquamata</taxon>
        <taxon>Toxicofera</taxon>
        <taxon>Serpentes</taxon>
        <taxon>Colubroidea</taxon>
        <taxon>Elapidae</taxon>
        <taxon>Bungarinae</taxon>
        <taxon>Bungarus</taxon>
    </lineage>
</organism>
<keyword id="KW-0903">Direct protein sequencing</keyword>
<keyword id="KW-1015">Disulfide bond</keyword>
<keyword id="KW-0528">Neurotoxin</keyword>
<keyword id="KW-0629">Postsynaptic neurotoxin</keyword>
<keyword id="KW-0964">Secreted</keyword>
<keyword id="KW-0732">Signal</keyword>
<keyword id="KW-0800">Toxin</keyword>
<reference key="1">
    <citation type="journal article" date="2007" name="FEBS J.">
        <title>Sequences, geographic variations and molecular phylogeny of venom phospholipases and three-finger toxins of eastern India Bungarus fasciatus and kinetic analyses of its Pro31 phospholipases A2.</title>
        <authorList>
            <person name="Tsai I.-H."/>
            <person name="Tsai H.-Y."/>
            <person name="Saha A."/>
            <person name="Gomes A."/>
        </authorList>
    </citation>
    <scope>NUCLEOTIDE SEQUENCE [MRNA]</scope>
    <scope>PROTEIN SEQUENCE OF 22-35</scope>
    <scope>MASS SPECTROMETRY</scope>
    <source>
        <tissue>Venom</tissue>
        <tissue>Venom gland</tissue>
    </source>
</reference>
<comment type="function">
    <text evidence="1">Blocks both the muscle-twitch response to nerve stimulation and the response to exogenous acetylcholine.</text>
</comment>
<comment type="subcellular location">
    <subcellularLocation>
        <location>Secreted</location>
    </subcellularLocation>
</comment>
<comment type="tissue specificity">
    <text>Expressed by the venom gland.</text>
</comment>
<comment type="mass spectrometry" mass="6455.0" error="1.0" method="Electrospray" evidence="3"/>
<comment type="similarity">
    <text evidence="4">Belongs to the three-finger toxin family. Short-chain subfamily. Orphan group XVIII sub-subfamily.</text>
</comment>
<proteinExistence type="evidence at protein level"/>
<feature type="signal peptide" evidence="3">
    <location>
        <begin position="1"/>
        <end position="21"/>
    </location>
</feature>
<feature type="chain" id="PRO_0000293105" description="Neurotoxin 3FTx-LI" evidence="5">
    <location>
        <begin position="22"/>
        <end position="79"/>
    </location>
</feature>
<feature type="disulfide bond" evidence="2">
    <location>
        <begin position="24"/>
        <end position="43"/>
    </location>
</feature>
<feature type="disulfide bond" evidence="2">
    <location>
        <begin position="36"/>
        <end position="61"/>
    </location>
</feature>
<feature type="disulfide bond" evidence="2">
    <location>
        <begin position="65"/>
        <end position="71"/>
    </location>
</feature>
<feature type="disulfide bond" evidence="2">
    <location>
        <begin position="72"/>
        <end position="77"/>
    </location>
</feature>
<dbReference type="EMBL" id="DQ508408">
    <property type="status" value="NOT_ANNOTATED_CDS"/>
    <property type="molecule type" value="mRNA"/>
</dbReference>
<dbReference type="SMR" id="P0C553"/>
<dbReference type="GO" id="GO:0005576">
    <property type="term" value="C:extracellular region"/>
    <property type="evidence" value="ECO:0007669"/>
    <property type="project" value="UniProtKB-SubCell"/>
</dbReference>
<dbReference type="GO" id="GO:0090729">
    <property type="term" value="F:toxin activity"/>
    <property type="evidence" value="ECO:0007669"/>
    <property type="project" value="UniProtKB-KW"/>
</dbReference>
<dbReference type="CDD" id="cd00206">
    <property type="entry name" value="TFP_snake_toxin"/>
    <property type="match status" value="1"/>
</dbReference>
<dbReference type="Gene3D" id="2.10.60.10">
    <property type="entry name" value="CD59"/>
    <property type="match status" value="1"/>
</dbReference>
<dbReference type="InterPro" id="IPR003571">
    <property type="entry name" value="Snake_3FTx"/>
</dbReference>
<dbReference type="InterPro" id="IPR045860">
    <property type="entry name" value="Snake_toxin-like_sf"/>
</dbReference>
<dbReference type="InterPro" id="IPR054131">
    <property type="entry name" value="Toxin_cobra-type"/>
</dbReference>
<dbReference type="Pfam" id="PF21947">
    <property type="entry name" value="Toxin_cobra-type"/>
    <property type="match status" value="1"/>
</dbReference>
<dbReference type="SUPFAM" id="SSF57302">
    <property type="entry name" value="Snake toxin-like"/>
    <property type="match status" value="1"/>
</dbReference>
<name>3SOII_BUNFA</name>
<sequence length="79" mass="8754">MKTLLLTLVVVTIVCLDLGYTLICYSSSMNKDSKTCQKWETVCFQEAFKPHSSGMIILRGCASSCPKGYTCCATDLCNW</sequence>
<evidence type="ECO:0000250" key="1"/>
<evidence type="ECO:0000250" key="2">
    <source>
        <dbReference type="UniProtKB" id="P60301"/>
    </source>
</evidence>
<evidence type="ECO:0000269" key="3">
    <source>
    </source>
</evidence>
<evidence type="ECO:0000305" key="4"/>
<evidence type="ECO:0000305" key="5">
    <source>
    </source>
</evidence>
<protein>
    <recommendedName>
        <fullName>Neurotoxin 3FTx-LI</fullName>
    </recommendedName>
</protein>